<organism>
    <name type="scientific">Mus musculus</name>
    <name type="common">Mouse</name>
    <dbReference type="NCBI Taxonomy" id="10090"/>
    <lineage>
        <taxon>Eukaryota</taxon>
        <taxon>Metazoa</taxon>
        <taxon>Chordata</taxon>
        <taxon>Craniata</taxon>
        <taxon>Vertebrata</taxon>
        <taxon>Euteleostomi</taxon>
        <taxon>Mammalia</taxon>
        <taxon>Eutheria</taxon>
        <taxon>Euarchontoglires</taxon>
        <taxon>Glires</taxon>
        <taxon>Rodentia</taxon>
        <taxon>Myomorpha</taxon>
        <taxon>Muroidea</taxon>
        <taxon>Muridae</taxon>
        <taxon>Murinae</taxon>
        <taxon>Mus</taxon>
        <taxon>Mus</taxon>
    </lineage>
</organism>
<comment type="function">
    <text evidence="2 3 4 6 8 11 12 14 15">Catalyzes the hydrolytic deamination of adenosine and 2-deoxyadenosine (PubMed:10720488, PubMed:8634299, PubMed:8672487, PubMed:8942668, PubMed:9272950). Plays an important role in purine metabolism and in adenosine homeostasis (PubMed:10720488, PubMed:9272950). Modulates signaling by extracellular adenosine, and so contributes indirectly to cellular signaling events (PubMed:11435465). Acts as a positive regulator of T-cell coactivation, by binding DPP4. Its interaction with DPP4 regulates lymphocyte-epithelial cell adhesion (By similarity). Enhances dendritic cell immunogenicity by affecting dendritic cell costimulatory molecule expression and cytokines and chemokines secretion (By similarity). Enhances CD4+ T-cell differentiation and proliferation (By similarity). Acts as a positive modulator of adenosine receptors ADORA1 and ADORA2A, by enhancing their ligand affinity via conformational change (By similarity). Stimulates plasminogen activation (By similarity). Plays a role in male fertility (By similarity). Plays a protective role in early postimplantation embryonic development (PubMed:9272950). Also responsible for the deamination of cordycepin (3'-deoxyadenosine), a fungal natural product that shows antitumor, antibacterial, antifungal, antivirus, and immune regulation properties (PubMed:26038697).</text>
</comment>
<comment type="catalytic activity">
    <reaction evidence="4 11 12 14 15">
        <text>adenosine + H2O + H(+) = inosine + NH4(+)</text>
        <dbReference type="Rhea" id="RHEA:24408"/>
        <dbReference type="ChEBI" id="CHEBI:15377"/>
        <dbReference type="ChEBI" id="CHEBI:15378"/>
        <dbReference type="ChEBI" id="CHEBI:16335"/>
        <dbReference type="ChEBI" id="CHEBI:17596"/>
        <dbReference type="ChEBI" id="CHEBI:28938"/>
        <dbReference type="EC" id="3.5.4.4"/>
    </reaction>
    <physiologicalReaction direction="left-to-right" evidence="18">
        <dbReference type="Rhea" id="RHEA:24409"/>
    </physiologicalReaction>
</comment>
<comment type="catalytic activity">
    <reaction evidence="4">
        <text>2'-deoxyadenosine + H2O + H(+) = 2'-deoxyinosine + NH4(+)</text>
        <dbReference type="Rhea" id="RHEA:28190"/>
        <dbReference type="ChEBI" id="CHEBI:15377"/>
        <dbReference type="ChEBI" id="CHEBI:15378"/>
        <dbReference type="ChEBI" id="CHEBI:17256"/>
        <dbReference type="ChEBI" id="CHEBI:28938"/>
        <dbReference type="ChEBI" id="CHEBI:28997"/>
        <dbReference type="EC" id="3.5.4.4"/>
    </reaction>
    <physiologicalReaction direction="left-to-right" evidence="18">
        <dbReference type="Rhea" id="RHEA:28191"/>
    </physiologicalReaction>
</comment>
<comment type="catalytic activity">
    <reaction evidence="8">
        <text>cordycepin + H2O + H(+) = 3'-deoxyinosine + NH4(+)</text>
        <dbReference type="Rhea" id="RHEA:79047"/>
        <dbReference type="ChEBI" id="CHEBI:15377"/>
        <dbReference type="ChEBI" id="CHEBI:15378"/>
        <dbReference type="ChEBI" id="CHEBI:28938"/>
        <dbReference type="ChEBI" id="CHEBI:29014"/>
        <dbReference type="ChEBI" id="CHEBI:229694"/>
    </reaction>
    <physiologicalReaction direction="left-to-right" evidence="8">
        <dbReference type="Rhea" id="RHEA:79048"/>
    </physiologicalReaction>
</comment>
<comment type="cofactor">
    <cofactor evidence="7 11 16">
        <name>Zn(2+)</name>
        <dbReference type="ChEBI" id="CHEBI:29105"/>
    </cofactor>
    <text evidence="7 11 16">Binds 1 zinc ion per subunit.</text>
</comment>
<comment type="biophysicochemical properties">
    <kinetics>
        <KM evidence="11 12">20 uM for adenosine</KM>
    </kinetics>
    <phDependence>
        <text evidence="11 12">Optimum pH is 6-8.5.</text>
    </phDependence>
</comment>
<comment type="subunit">
    <text evidence="2">Interacts with DPP4 (via extracellular domain). Interacts with PLG (via Kringle 4 domain); the interaction stimulates PLG activation when in complex with DPP4.</text>
</comment>
<comment type="subcellular location">
    <subcellularLocation>
        <location evidence="2">Cell membrane</location>
        <topology evidence="1">Peripheral membrane protein</topology>
        <orientation evidence="1">Extracellular side</orientation>
    </subcellularLocation>
    <subcellularLocation>
        <location evidence="2">Cell junction</location>
    </subcellularLocation>
    <subcellularLocation>
        <location evidence="13">Cytoplasmic vesicle lumen</location>
    </subcellularLocation>
    <subcellularLocation>
        <location evidence="1">Cytoplasm</location>
    </subcellularLocation>
    <subcellularLocation>
        <location evidence="2">Lysosome</location>
    </subcellularLocation>
    <text evidence="2">Colocalized with DPP4 at the cell surface.</text>
</comment>
<comment type="tissue specificity">
    <text evidence="13 15">Detected in brain neurons in the median emninence (at protein level) (PubMed:8783262). Expressed in secondary deciduum (at protein level) (PubMed:9272950). Found in all tissues, occurs in large amounts in T-lymphocytes and, at the time of weaning, in gastrointestinal tissues.</text>
</comment>
<comment type="developmental stage">
    <text evidence="15">Expressed in trophoblast at 7.5 dpc and 9.5 dpc.</text>
</comment>
<comment type="disruption phenotype">
    <text evidence="5 9 10">Lethal at perinatal stages. Fetuses are viable up to 18 dpc, but after this survival decreases rapidly. Fewer that 10% of mutant pups are born live, and these die within hours after birth. Mutant fetuses display much higher than normal levels of adenosine and dATP, respiratory distress, hepatocellular degeneration and necrosis. Prenatal lethality can be avoided using an ADA expression vector with a trophoblast-specific promoter. Mutant mice die after about three weeks due to immunodeficiency, disturbances in purine metabolism and severe lung inflammation.</text>
</comment>
<comment type="similarity">
    <text evidence="17">Belongs to the metallo-dependent hydrolases superfamily. Adenosine and AMP deaminases family.</text>
</comment>
<dbReference type="EC" id="3.5.4.4" evidence="4 11 12 14 15"/>
<dbReference type="EMBL" id="M10319">
    <property type="protein sequence ID" value="AAA37173.1"/>
    <property type="molecule type" value="mRNA"/>
</dbReference>
<dbReference type="EMBL" id="M34251">
    <property type="protein sequence ID" value="AAB07142.1"/>
    <property type="molecule type" value="Genomic_DNA"/>
</dbReference>
<dbReference type="EMBL" id="M34242">
    <property type="protein sequence ID" value="AAB07142.1"/>
    <property type="status" value="JOINED"/>
    <property type="molecule type" value="Genomic_DNA"/>
</dbReference>
<dbReference type="EMBL" id="M34243">
    <property type="protein sequence ID" value="AAB07142.1"/>
    <property type="status" value="JOINED"/>
    <property type="molecule type" value="Genomic_DNA"/>
</dbReference>
<dbReference type="EMBL" id="M34244">
    <property type="protein sequence ID" value="AAB07142.1"/>
    <property type="status" value="JOINED"/>
    <property type="molecule type" value="Genomic_DNA"/>
</dbReference>
<dbReference type="EMBL" id="M34246">
    <property type="protein sequence ID" value="AAB07142.1"/>
    <property type="status" value="JOINED"/>
    <property type="molecule type" value="Genomic_DNA"/>
</dbReference>
<dbReference type="EMBL" id="M34247">
    <property type="protein sequence ID" value="AAB07142.1"/>
    <property type="status" value="JOINED"/>
    <property type="molecule type" value="Genomic_DNA"/>
</dbReference>
<dbReference type="EMBL" id="M34248">
    <property type="protein sequence ID" value="AAB07142.1"/>
    <property type="status" value="JOINED"/>
    <property type="molecule type" value="Genomic_DNA"/>
</dbReference>
<dbReference type="EMBL" id="M34249">
    <property type="protein sequence ID" value="AAB07142.1"/>
    <property type="status" value="JOINED"/>
    <property type="molecule type" value="Genomic_DNA"/>
</dbReference>
<dbReference type="EMBL" id="M34250">
    <property type="protein sequence ID" value="AAB07142.1"/>
    <property type="status" value="JOINED"/>
    <property type="molecule type" value="Genomic_DNA"/>
</dbReference>
<dbReference type="EMBL" id="U73107">
    <property type="protein sequence ID" value="AAC08442.1"/>
    <property type="molecule type" value="Genomic_DNA"/>
</dbReference>
<dbReference type="EMBL" id="AF483480">
    <property type="protein sequence ID" value="AAL90754.1"/>
    <property type="molecule type" value="mRNA"/>
</dbReference>
<dbReference type="EMBL" id="AF483481">
    <property type="protein sequence ID" value="AAL90755.1"/>
    <property type="molecule type" value="mRNA"/>
</dbReference>
<dbReference type="EMBL" id="AK075899">
    <property type="protein sequence ID" value="BAC36039.1"/>
    <property type="molecule type" value="mRNA"/>
</dbReference>
<dbReference type="EMBL" id="BC002075">
    <property type="protein sequence ID" value="AAH02075.1"/>
    <property type="molecule type" value="mRNA"/>
</dbReference>
<dbReference type="CCDS" id="CCDS17015.1"/>
<dbReference type="PIR" id="A01010">
    <property type="entry name" value="DUMSA"/>
</dbReference>
<dbReference type="RefSeq" id="NP_001258981.1">
    <property type="nucleotide sequence ID" value="NM_001272052.2"/>
</dbReference>
<dbReference type="RefSeq" id="NP_031424.1">
    <property type="nucleotide sequence ID" value="NM_007398.5"/>
</dbReference>
<dbReference type="PDB" id="1A4L">
    <property type="method" value="X-ray"/>
    <property type="resolution" value="2.60 A"/>
    <property type="chains" value="A/B/C/D=4-352"/>
</dbReference>
<dbReference type="PDB" id="1A4M">
    <property type="method" value="X-ray"/>
    <property type="resolution" value="1.95 A"/>
    <property type="chains" value="A/B/C/D=4-352"/>
</dbReference>
<dbReference type="PDB" id="1ADD">
    <property type="method" value="X-ray"/>
    <property type="resolution" value="2.40 A"/>
    <property type="chains" value="A=4-352"/>
</dbReference>
<dbReference type="PDB" id="1FKW">
    <property type="method" value="X-ray"/>
    <property type="resolution" value="2.40 A"/>
    <property type="chains" value="A=4-352"/>
</dbReference>
<dbReference type="PDB" id="1FKX">
    <property type="method" value="X-ray"/>
    <property type="resolution" value="2.40 A"/>
    <property type="chains" value="A=4-352"/>
</dbReference>
<dbReference type="PDB" id="1UIO">
    <property type="method" value="X-ray"/>
    <property type="resolution" value="2.40 A"/>
    <property type="chains" value="A=4-352"/>
</dbReference>
<dbReference type="PDB" id="1UIP">
    <property type="method" value="X-ray"/>
    <property type="resolution" value="2.40 A"/>
    <property type="chains" value="A=4-352"/>
</dbReference>
<dbReference type="PDB" id="2ADA">
    <property type="method" value="X-ray"/>
    <property type="resolution" value="2.40 A"/>
    <property type="chains" value="A=1-352"/>
</dbReference>
<dbReference type="PDB" id="3KM8">
    <property type="method" value="X-ray"/>
    <property type="resolution" value="2.00 A"/>
    <property type="chains" value="A/B=1-352"/>
</dbReference>
<dbReference type="PDB" id="3MVI">
    <property type="method" value="X-ray"/>
    <property type="resolution" value="1.60 A"/>
    <property type="chains" value="A/B=4-352"/>
</dbReference>
<dbReference type="PDB" id="3MVT">
    <property type="method" value="X-ray"/>
    <property type="resolution" value="2.20 A"/>
    <property type="chains" value="A/C=4-352"/>
</dbReference>
<dbReference type="PDB" id="3T1G">
    <property type="method" value="X-ray"/>
    <property type="resolution" value="2.35 A"/>
    <property type="chains" value="A=4-352"/>
</dbReference>
<dbReference type="PDBsum" id="1A4L"/>
<dbReference type="PDBsum" id="1A4M"/>
<dbReference type="PDBsum" id="1ADD"/>
<dbReference type="PDBsum" id="1FKW"/>
<dbReference type="PDBsum" id="1FKX"/>
<dbReference type="PDBsum" id="1UIO"/>
<dbReference type="PDBsum" id="1UIP"/>
<dbReference type="PDBsum" id="2ADA"/>
<dbReference type="PDBsum" id="3KM8"/>
<dbReference type="PDBsum" id="3MVI"/>
<dbReference type="PDBsum" id="3MVT"/>
<dbReference type="PDBsum" id="3T1G"/>
<dbReference type="SMR" id="P03958"/>
<dbReference type="BioGRID" id="197959">
    <property type="interactions" value="9"/>
</dbReference>
<dbReference type="FunCoup" id="P03958">
    <property type="interactions" value="414"/>
</dbReference>
<dbReference type="IntAct" id="P03958">
    <property type="interactions" value="1"/>
</dbReference>
<dbReference type="STRING" id="10090.ENSMUSP00000017841"/>
<dbReference type="BindingDB" id="P03958"/>
<dbReference type="ChEMBL" id="CHEMBL3206"/>
<dbReference type="iPTMnet" id="P03958"/>
<dbReference type="PhosphoSitePlus" id="P03958"/>
<dbReference type="SwissPalm" id="P03958"/>
<dbReference type="REPRODUCTION-2DPAGE" id="P03958"/>
<dbReference type="jPOST" id="P03958"/>
<dbReference type="PaxDb" id="10090-ENSMUSP00000017841"/>
<dbReference type="PeptideAtlas" id="P03958"/>
<dbReference type="ProteomicsDB" id="296065"/>
<dbReference type="Pumba" id="P03958"/>
<dbReference type="Antibodypedia" id="700">
    <property type="antibodies" value="526 antibodies from 44 providers"/>
</dbReference>
<dbReference type="DNASU" id="11486"/>
<dbReference type="Ensembl" id="ENSMUST00000017841.4">
    <property type="protein sequence ID" value="ENSMUSP00000017841.4"/>
    <property type="gene ID" value="ENSMUSG00000017697.4"/>
</dbReference>
<dbReference type="GeneID" id="11486"/>
<dbReference type="KEGG" id="mmu:11486"/>
<dbReference type="UCSC" id="uc008ntl.2">
    <property type="organism name" value="mouse"/>
</dbReference>
<dbReference type="AGR" id="MGI:87916"/>
<dbReference type="CTD" id="100"/>
<dbReference type="MGI" id="MGI:87916">
    <property type="gene designation" value="Ada"/>
</dbReference>
<dbReference type="VEuPathDB" id="HostDB:ENSMUSG00000017697"/>
<dbReference type="eggNOG" id="KOG1097">
    <property type="taxonomic scope" value="Eukaryota"/>
</dbReference>
<dbReference type="GeneTree" id="ENSGT00950000183113"/>
<dbReference type="HOGENOM" id="CLU_039228_0_1_1"/>
<dbReference type="InParanoid" id="P03958"/>
<dbReference type="OMA" id="NHFTIHA"/>
<dbReference type="OrthoDB" id="272271at2759"/>
<dbReference type="PhylomeDB" id="P03958"/>
<dbReference type="TreeFam" id="TF314270"/>
<dbReference type="BRENDA" id="3.5.4.4">
    <property type="organism ID" value="3474"/>
</dbReference>
<dbReference type="Reactome" id="R-MMU-74217">
    <property type="pathway name" value="Purine salvage"/>
</dbReference>
<dbReference type="Reactome" id="R-MMU-9755088">
    <property type="pathway name" value="Ribavirin ADME"/>
</dbReference>
<dbReference type="SABIO-RK" id="P03958"/>
<dbReference type="BioGRID-ORCS" id="11486">
    <property type="hits" value="1 hit in 78 CRISPR screens"/>
</dbReference>
<dbReference type="ChiTaRS" id="Ada">
    <property type="organism name" value="mouse"/>
</dbReference>
<dbReference type="EvolutionaryTrace" id="P03958"/>
<dbReference type="PRO" id="PR:P03958"/>
<dbReference type="Proteomes" id="UP000000589">
    <property type="component" value="Chromosome 2"/>
</dbReference>
<dbReference type="RNAct" id="P03958">
    <property type="molecule type" value="protein"/>
</dbReference>
<dbReference type="Bgee" id="ENSMUSG00000017697">
    <property type="expression patterns" value="Expressed in decidua and 197 other cell types or tissues"/>
</dbReference>
<dbReference type="ExpressionAtlas" id="P03958">
    <property type="expression patterns" value="baseline and differential"/>
</dbReference>
<dbReference type="GO" id="GO:0070161">
    <property type="term" value="C:anchoring junction"/>
    <property type="evidence" value="ECO:0007669"/>
    <property type="project" value="UniProtKB-SubCell"/>
</dbReference>
<dbReference type="GO" id="GO:0005737">
    <property type="term" value="C:cytoplasm"/>
    <property type="evidence" value="ECO:0000314"/>
    <property type="project" value="MGI"/>
</dbReference>
<dbReference type="GO" id="GO:0060205">
    <property type="term" value="C:cytoplasmic vesicle lumen"/>
    <property type="evidence" value="ECO:0007669"/>
    <property type="project" value="UniProtKB-SubCell"/>
</dbReference>
<dbReference type="GO" id="GO:0005829">
    <property type="term" value="C:cytosol"/>
    <property type="evidence" value="ECO:0000314"/>
    <property type="project" value="MGI"/>
</dbReference>
<dbReference type="GO" id="GO:0009897">
    <property type="term" value="C:external side of plasma membrane"/>
    <property type="evidence" value="ECO:0007669"/>
    <property type="project" value="Ensembl"/>
</dbReference>
<dbReference type="GO" id="GO:0005764">
    <property type="term" value="C:lysosome"/>
    <property type="evidence" value="ECO:0007669"/>
    <property type="project" value="UniProtKB-SubCell"/>
</dbReference>
<dbReference type="GO" id="GO:0046936">
    <property type="term" value="F:2'-deoxyadenosine deaminase activity"/>
    <property type="evidence" value="ECO:0000315"/>
    <property type="project" value="MGI"/>
</dbReference>
<dbReference type="GO" id="GO:0004000">
    <property type="term" value="F:adenosine deaminase activity"/>
    <property type="evidence" value="ECO:0000314"/>
    <property type="project" value="UniProtKB"/>
</dbReference>
<dbReference type="GO" id="GO:0008270">
    <property type="term" value="F:zinc ion binding"/>
    <property type="evidence" value="ECO:0000314"/>
    <property type="project" value="UniProtKB"/>
</dbReference>
<dbReference type="GO" id="GO:0006154">
    <property type="term" value="P:adenosine catabolic process"/>
    <property type="evidence" value="ECO:0000314"/>
    <property type="project" value="UniProtKB"/>
</dbReference>
<dbReference type="GO" id="GO:0000255">
    <property type="term" value="P:allantoin metabolic process"/>
    <property type="evidence" value="ECO:0000314"/>
    <property type="project" value="MGI"/>
</dbReference>
<dbReference type="GO" id="GO:0046632">
    <property type="term" value="P:alpha-beta T cell differentiation"/>
    <property type="evidence" value="ECO:0000315"/>
    <property type="project" value="MGI"/>
</dbReference>
<dbReference type="GO" id="GO:0043605">
    <property type="term" value="P:amide catabolic process"/>
    <property type="evidence" value="ECO:0000314"/>
    <property type="project" value="MGI"/>
</dbReference>
<dbReference type="GO" id="GO:0006196">
    <property type="term" value="P:AMP catabolic process"/>
    <property type="evidence" value="ECO:0000314"/>
    <property type="project" value="MGI"/>
</dbReference>
<dbReference type="GO" id="GO:0044209">
    <property type="term" value="P:AMP salvage"/>
    <property type="evidence" value="ECO:0000314"/>
    <property type="project" value="MGI"/>
</dbReference>
<dbReference type="GO" id="GO:0006915">
    <property type="term" value="P:apoptotic process"/>
    <property type="evidence" value="ECO:0000315"/>
    <property type="project" value="MGI"/>
</dbReference>
<dbReference type="GO" id="GO:0042100">
    <property type="term" value="P:B cell proliferation"/>
    <property type="evidence" value="ECO:0000315"/>
    <property type="project" value="MGI"/>
</dbReference>
<dbReference type="GO" id="GO:0019722">
    <property type="term" value="P:calcium-mediated signaling"/>
    <property type="evidence" value="ECO:0000315"/>
    <property type="project" value="MGI"/>
</dbReference>
<dbReference type="GO" id="GO:0007155">
    <property type="term" value="P:cell adhesion"/>
    <property type="evidence" value="ECO:0007669"/>
    <property type="project" value="UniProtKB-KW"/>
</dbReference>
<dbReference type="GO" id="GO:0046059">
    <property type="term" value="P:dAMP catabolic process"/>
    <property type="evidence" value="ECO:0000315"/>
    <property type="project" value="MGI"/>
</dbReference>
<dbReference type="GO" id="GO:0046061">
    <property type="term" value="P:dATP catabolic process"/>
    <property type="evidence" value="ECO:0000314"/>
    <property type="project" value="MGI"/>
</dbReference>
<dbReference type="GO" id="GO:0006157">
    <property type="term" value="P:deoxyadenosine catabolic process"/>
    <property type="evidence" value="ECO:0000314"/>
    <property type="project" value="MGI"/>
</dbReference>
<dbReference type="GO" id="GO:0048566">
    <property type="term" value="P:embryonic digestive tract development"/>
    <property type="evidence" value="ECO:0000315"/>
    <property type="project" value="MGI"/>
</dbReference>
<dbReference type="GO" id="GO:0002314">
    <property type="term" value="P:germinal center B cell differentiation"/>
    <property type="evidence" value="ECO:0000315"/>
    <property type="project" value="MGI"/>
</dbReference>
<dbReference type="GO" id="GO:0002467">
    <property type="term" value="P:germinal center formation"/>
    <property type="evidence" value="ECO:0000315"/>
    <property type="project" value="MGI"/>
</dbReference>
<dbReference type="GO" id="GO:0032263">
    <property type="term" value="P:GMP salvage"/>
    <property type="evidence" value="ECO:0000314"/>
    <property type="project" value="MGI"/>
</dbReference>
<dbReference type="GO" id="GO:0046101">
    <property type="term" value="P:hypoxanthine biosynthetic process"/>
    <property type="evidence" value="ECO:0000315"/>
    <property type="project" value="MGI"/>
</dbReference>
<dbReference type="GO" id="GO:0032264">
    <property type="term" value="P:IMP salvage"/>
    <property type="evidence" value="ECO:0000304"/>
    <property type="project" value="MGI"/>
</dbReference>
<dbReference type="GO" id="GO:0001701">
    <property type="term" value="P:in utero embryonic development"/>
    <property type="evidence" value="ECO:0000315"/>
    <property type="project" value="MGI"/>
</dbReference>
<dbReference type="GO" id="GO:0140928">
    <property type="term" value="P:inhibition of non-skeletal tissue mineralization"/>
    <property type="evidence" value="ECO:0000266"/>
    <property type="project" value="MGI"/>
</dbReference>
<dbReference type="GO" id="GO:0046103">
    <property type="term" value="P:inosine biosynthetic process"/>
    <property type="evidence" value="ECO:0000314"/>
    <property type="project" value="UniProtKB"/>
</dbReference>
<dbReference type="GO" id="GO:0050900">
    <property type="term" value="P:leukocyte migration"/>
    <property type="evidence" value="ECO:0000315"/>
    <property type="project" value="MGI"/>
</dbReference>
<dbReference type="GO" id="GO:0001889">
    <property type="term" value="P:liver development"/>
    <property type="evidence" value="ECO:0000315"/>
    <property type="project" value="MGI"/>
</dbReference>
<dbReference type="GO" id="GO:0048286">
    <property type="term" value="P:lung alveolus development"/>
    <property type="evidence" value="ECO:0000315"/>
    <property type="project" value="MGI"/>
</dbReference>
<dbReference type="GO" id="GO:0030324">
    <property type="term" value="P:lung development"/>
    <property type="evidence" value="ECO:0000315"/>
    <property type="project" value="MGI"/>
</dbReference>
<dbReference type="GO" id="GO:0002901">
    <property type="term" value="P:mature B cell apoptotic process"/>
    <property type="evidence" value="ECO:0000315"/>
    <property type="project" value="MGI"/>
</dbReference>
<dbReference type="GO" id="GO:0070254">
    <property type="term" value="P:mucus secretion"/>
    <property type="evidence" value="ECO:0000315"/>
    <property type="project" value="MGI"/>
</dbReference>
<dbReference type="GO" id="GO:0060169">
    <property type="term" value="P:negative regulation of adenosine receptor signaling pathway"/>
    <property type="evidence" value="ECO:0007669"/>
    <property type="project" value="Ensembl"/>
</dbReference>
<dbReference type="GO" id="GO:0043066">
    <property type="term" value="P:negative regulation of apoptotic process"/>
    <property type="evidence" value="ECO:0000315"/>
    <property type="project" value="MGI"/>
</dbReference>
<dbReference type="GO" id="GO:0050728">
    <property type="term" value="P:negative regulation of inflammatory response"/>
    <property type="evidence" value="ECO:0000315"/>
    <property type="project" value="MGI"/>
</dbReference>
<dbReference type="GO" id="GO:0002686">
    <property type="term" value="P:negative regulation of leukocyte migration"/>
    <property type="evidence" value="ECO:0000315"/>
    <property type="project" value="MGI"/>
</dbReference>
<dbReference type="GO" id="GO:0002906">
    <property type="term" value="P:negative regulation of mature B cell apoptotic process"/>
    <property type="evidence" value="ECO:0000315"/>
    <property type="project" value="MGI"/>
</dbReference>
<dbReference type="GO" id="GO:0070256">
    <property type="term" value="P:negative regulation of mucus secretion"/>
    <property type="evidence" value="ECO:0000315"/>
    <property type="project" value="MGI"/>
</dbReference>
<dbReference type="GO" id="GO:0060407">
    <property type="term" value="P:negative regulation of penile erection"/>
    <property type="evidence" value="ECO:0000315"/>
    <property type="project" value="MGI"/>
</dbReference>
<dbReference type="GO" id="GO:0070244">
    <property type="term" value="P:negative regulation of thymocyte apoptotic process"/>
    <property type="evidence" value="ECO:0000315"/>
    <property type="project" value="MGI"/>
</dbReference>
<dbReference type="GO" id="GO:0043084">
    <property type="term" value="P:penile erection"/>
    <property type="evidence" value="ECO:0000315"/>
    <property type="project" value="MGI"/>
</dbReference>
<dbReference type="GO" id="GO:0048541">
    <property type="term" value="P:Peyer's patch development"/>
    <property type="evidence" value="ECO:0000315"/>
    <property type="project" value="MGI"/>
</dbReference>
<dbReference type="GO" id="GO:0001890">
    <property type="term" value="P:placenta development"/>
    <property type="evidence" value="ECO:0000315"/>
    <property type="project" value="MGI"/>
</dbReference>
<dbReference type="GO" id="GO:0046638">
    <property type="term" value="P:positive regulation of alpha-beta T cell differentiation"/>
    <property type="evidence" value="ECO:0000315"/>
    <property type="project" value="MGI"/>
</dbReference>
<dbReference type="GO" id="GO:0030890">
    <property type="term" value="P:positive regulation of B cell proliferation"/>
    <property type="evidence" value="ECO:0000315"/>
    <property type="project" value="MGI"/>
</dbReference>
<dbReference type="GO" id="GO:0050850">
    <property type="term" value="P:positive regulation of calcium-mediated signaling"/>
    <property type="evidence" value="ECO:0000315"/>
    <property type="project" value="MGI"/>
</dbReference>
<dbReference type="GO" id="GO:0002636">
    <property type="term" value="P:positive regulation of germinal center formation"/>
    <property type="evidence" value="ECO:0000315"/>
    <property type="project" value="MGI"/>
</dbReference>
<dbReference type="GO" id="GO:0010460">
    <property type="term" value="P:positive regulation of heart rate"/>
    <property type="evidence" value="ECO:0000315"/>
    <property type="project" value="MGI"/>
</dbReference>
<dbReference type="GO" id="GO:0045987">
    <property type="term" value="P:positive regulation of smooth muscle contraction"/>
    <property type="evidence" value="ECO:0000315"/>
    <property type="project" value="MGI"/>
</dbReference>
<dbReference type="GO" id="GO:0050870">
    <property type="term" value="P:positive regulation of T cell activation"/>
    <property type="evidence" value="ECO:0000315"/>
    <property type="project" value="MGI"/>
</dbReference>
<dbReference type="GO" id="GO:0045582">
    <property type="term" value="P:positive regulation of T cell differentiation"/>
    <property type="evidence" value="ECO:0000315"/>
    <property type="project" value="MGI"/>
</dbReference>
<dbReference type="GO" id="GO:0033089">
    <property type="term" value="P:positive regulation of T cell differentiation in thymus"/>
    <property type="evidence" value="ECO:0000315"/>
    <property type="project" value="MGI"/>
</dbReference>
<dbReference type="GO" id="GO:0050862">
    <property type="term" value="P:positive regulation of T cell receptor signaling pathway"/>
    <property type="evidence" value="ECO:0000315"/>
    <property type="project" value="MGI"/>
</dbReference>
<dbReference type="GO" id="GO:0033632">
    <property type="term" value="P:regulation of cell-cell adhesion mediated by integrin"/>
    <property type="evidence" value="ECO:0007669"/>
    <property type="project" value="Ensembl"/>
</dbReference>
<dbReference type="GO" id="GO:0045580">
    <property type="term" value="P:regulation of T cell differentiation"/>
    <property type="evidence" value="ECO:0000315"/>
    <property type="project" value="MGI"/>
</dbReference>
<dbReference type="GO" id="GO:0001666">
    <property type="term" value="P:response to hypoxia"/>
    <property type="evidence" value="ECO:0007669"/>
    <property type="project" value="Ensembl"/>
</dbReference>
<dbReference type="GO" id="GO:0014074">
    <property type="term" value="P:response to purine-containing compound"/>
    <property type="evidence" value="ECO:0007669"/>
    <property type="project" value="Ensembl"/>
</dbReference>
<dbReference type="GO" id="GO:0006939">
    <property type="term" value="P:smooth muscle contraction"/>
    <property type="evidence" value="ECO:0000315"/>
    <property type="project" value="MGI"/>
</dbReference>
<dbReference type="GO" id="GO:0042110">
    <property type="term" value="P:T cell activation"/>
    <property type="evidence" value="ECO:0000315"/>
    <property type="project" value="MGI"/>
</dbReference>
<dbReference type="GO" id="GO:0030217">
    <property type="term" value="P:T cell differentiation"/>
    <property type="evidence" value="ECO:0000315"/>
    <property type="project" value="MGI"/>
</dbReference>
<dbReference type="GO" id="GO:0033077">
    <property type="term" value="P:T cell differentiation in thymus"/>
    <property type="evidence" value="ECO:0000315"/>
    <property type="project" value="MGI"/>
</dbReference>
<dbReference type="GO" id="GO:0050852">
    <property type="term" value="P:T cell receptor signaling pathway"/>
    <property type="evidence" value="ECO:0000315"/>
    <property type="project" value="MGI"/>
</dbReference>
<dbReference type="GO" id="GO:0070242">
    <property type="term" value="P:thymocyte apoptotic process"/>
    <property type="evidence" value="ECO:0000315"/>
    <property type="project" value="MGI"/>
</dbReference>
<dbReference type="GO" id="GO:0001829">
    <property type="term" value="P:trophectodermal cell differentiation"/>
    <property type="evidence" value="ECO:0000315"/>
    <property type="project" value="MGI"/>
</dbReference>
<dbReference type="GO" id="GO:0046111">
    <property type="term" value="P:xanthine biosynthetic process"/>
    <property type="evidence" value="ECO:0000315"/>
    <property type="project" value="MGI"/>
</dbReference>
<dbReference type="CDD" id="cd01320">
    <property type="entry name" value="ADA"/>
    <property type="match status" value="1"/>
</dbReference>
<dbReference type="FunFam" id="3.20.20.140:FF:000038">
    <property type="entry name" value="Adenosine deaminase"/>
    <property type="match status" value="1"/>
</dbReference>
<dbReference type="Gene3D" id="3.20.20.140">
    <property type="entry name" value="Metal-dependent hydrolases"/>
    <property type="match status" value="1"/>
</dbReference>
<dbReference type="HAMAP" id="MF_00540">
    <property type="entry name" value="A_deaminase"/>
    <property type="match status" value="1"/>
</dbReference>
<dbReference type="InterPro" id="IPR006650">
    <property type="entry name" value="A/AMP_deam_AS"/>
</dbReference>
<dbReference type="InterPro" id="IPR028893">
    <property type="entry name" value="A_deaminase"/>
</dbReference>
<dbReference type="InterPro" id="IPR001365">
    <property type="entry name" value="A_deaminase_dom"/>
</dbReference>
<dbReference type="InterPro" id="IPR006330">
    <property type="entry name" value="Ado/ade_deaminase"/>
</dbReference>
<dbReference type="InterPro" id="IPR032466">
    <property type="entry name" value="Metal_Hydrolase"/>
</dbReference>
<dbReference type="NCBIfam" id="TIGR01430">
    <property type="entry name" value="aden_deam"/>
    <property type="match status" value="1"/>
</dbReference>
<dbReference type="PANTHER" id="PTHR11409">
    <property type="entry name" value="ADENOSINE DEAMINASE"/>
    <property type="match status" value="1"/>
</dbReference>
<dbReference type="PANTHER" id="PTHR11409:SF43">
    <property type="entry name" value="ADENOSINE DEAMINASE"/>
    <property type="match status" value="1"/>
</dbReference>
<dbReference type="Pfam" id="PF00962">
    <property type="entry name" value="A_deaminase"/>
    <property type="match status" value="1"/>
</dbReference>
<dbReference type="SUPFAM" id="SSF51556">
    <property type="entry name" value="Metallo-dependent hydrolases"/>
    <property type="match status" value="1"/>
</dbReference>
<dbReference type="PROSITE" id="PS00485">
    <property type="entry name" value="A_DEAMINASE"/>
    <property type="match status" value="1"/>
</dbReference>
<protein>
    <recommendedName>
        <fullName>Adenosine deaminase</fullName>
        <ecNumber evidence="4 11 12 14 15">3.5.4.4</ecNumber>
    </recommendedName>
    <alternativeName>
        <fullName>Adenosine aminohydrolase</fullName>
    </alternativeName>
</protein>
<accession>P03958</accession>
<keyword id="KW-0002">3D-structure</keyword>
<keyword id="KW-0007">Acetylation</keyword>
<keyword id="KW-0130">Cell adhesion</keyword>
<keyword id="KW-0965">Cell junction</keyword>
<keyword id="KW-1003">Cell membrane</keyword>
<keyword id="KW-0963">Cytoplasm</keyword>
<keyword id="KW-0968">Cytoplasmic vesicle</keyword>
<keyword id="KW-0378">Hydrolase</keyword>
<keyword id="KW-0458">Lysosome</keyword>
<keyword id="KW-0472">Membrane</keyword>
<keyword id="KW-0479">Metal-binding</keyword>
<keyword id="KW-0546">Nucleotide metabolism</keyword>
<keyword id="KW-1185">Reference proteome</keyword>
<keyword id="KW-0862">Zinc</keyword>
<reference key="1">
    <citation type="journal article" date="1985" name="J. Biol. Chem.">
        <title>Identification of functional murine adenosine deaminase cDNA clones by complementation in Escherichia coli.</title>
        <authorList>
            <person name="Yeung C.-Y."/>
            <person name="Ingolia D.E."/>
            <person name="Roth D.B."/>
            <person name="Shoemaker C."/>
            <person name="Al-Ubaidi M.R."/>
            <person name="Yen J.-Y."/>
            <person name="Ching C."/>
            <person name="Bobonis C."/>
            <person name="Kaufman R.J."/>
            <person name="Kellems R.E."/>
        </authorList>
    </citation>
    <scope>NUCLEOTIDE SEQUENCE [MRNA]</scope>
</reference>
<reference key="2">
    <citation type="journal article" date="1990" name="Genomics">
        <title>Structural and functional analysis of the murine adenosine deaminase gene.</title>
        <authorList>
            <person name="Al-Ubaidi M.R."/>
            <person name="Ramamurthy V."/>
            <person name="Maa M.C."/>
            <person name="Ingolia D.E."/>
            <person name="Chinsky J.M."/>
            <person name="Martin B.D."/>
            <person name="Kellems R.E."/>
        </authorList>
    </citation>
    <scope>NUCLEOTIDE SEQUENCE [GENOMIC DNA]</scope>
</reference>
<reference key="3">
    <citation type="submission" date="1996-11" db="EMBL/GenBank/DDBJ databases">
        <title>The comparative sequence analysis of murine and human ADA genes.</title>
        <authorList>
            <person name="Xu P."/>
            <person name="Winston J.W."/>
            <person name="Lu J."/>
            <person name="Muzny D.M."/>
            <person name="Gibbs R.A."/>
            <person name="Kellems R.E."/>
        </authorList>
    </citation>
    <scope>NUCLEOTIDE SEQUENCE [GENOMIC DNA]</scope>
</reference>
<reference key="4">
    <citation type="journal article" date="2001" name="Mamm. Genome">
        <title>High-throughput sequence identification of gene coding variants within alcohol-related QTLs.</title>
        <authorList>
            <person name="Ehringer M.A."/>
            <person name="Thompson J."/>
            <person name="Conroy O."/>
            <person name="Xu Y."/>
            <person name="Yang F."/>
            <person name="Canniff J."/>
            <person name="Beeson M."/>
            <person name="Gordon L."/>
            <person name="Bennett B."/>
            <person name="Johnson T.E."/>
            <person name="Sikela J.M."/>
        </authorList>
    </citation>
    <scope>NUCLEOTIDE SEQUENCE [MRNA]</scope>
    <source>
        <strain>ILS</strain>
        <strain>ISS</strain>
    </source>
</reference>
<reference key="5">
    <citation type="journal article" date="2005" name="Science">
        <title>The transcriptional landscape of the mammalian genome.</title>
        <authorList>
            <person name="Carninci P."/>
            <person name="Kasukawa T."/>
            <person name="Katayama S."/>
            <person name="Gough J."/>
            <person name="Frith M.C."/>
            <person name="Maeda N."/>
            <person name="Oyama R."/>
            <person name="Ravasi T."/>
            <person name="Lenhard B."/>
            <person name="Wells C."/>
            <person name="Kodzius R."/>
            <person name="Shimokawa K."/>
            <person name="Bajic V.B."/>
            <person name="Brenner S.E."/>
            <person name="Batalov S."/>
            <person name="Forrest A.R."/>
            <person name="Zavolan M."/>
            <person name="Davis M.J."/>
            <person name="Wilming L.G."/>
            <person name="Aidinis V."/>
            <person name="Allen J.E."/>
            <person name="Ambesi-Impiombato A."/>
            <person name="Apweiler R."/>
            <person name="Aturaliya R.N."/>
            <person name="Bailey T.L."/>
            <person name="Bansal M."/>
            <person name="Baxter L."/>
            <person name="Beisel K.W."/>
            <person name="Bersano T."/>
            <person name="Bono H."/>
            <person name="Chalk A.M."/>
            <person name="Chiu K.P."/>
            <person name="Choudhary V."/>
            <person name="Christoffels A."/>
            <person name="Clutterbuck D.R."/>
            <person name="Crowe M.L."/>
            <person name="Dalla E."/>
            <person name="Dalrymple B.P."/>
            <person name="de Bono B."/>
            <person name="Della Gatta G."/>
            <person name="di Bernardo D."/>
            <person name="Down T."/>
            <person name="Engstrom P."/>
            <person name="Fagiolini M."/>
            <person name="Faulkner G."/>
            <person name="Fletcher C.F."/>
            <person name="Fukushima T."/>
            <person name="Furuno M."/>
            <person name="Futaki S."/>
            <person name="Gariboldi M."/>
            <person name="Georgii-Hemming P."/>
            <person name="Gingeras T.R."/>
            <person name="Gojobori T."/>
            <person name="Green R.E."/>
            <person name="Gustincich S."/>
            <person name="Harbers M."/>
            <person name="Hayashi Y."/>
            <person name="Hensch T.K."/>
            <person name="Hirokawa N."/>
            <person name="Hill D."/>
            <person name="Huminiecki L."/>
            <person name="Iacono M."/>
            <person name="Ikeo K."/>
            <person name="Iwama A."/>
            <person name="Ishikawa T."/>
            <person name="Jakt M."/>
            <person name="Kanapin A."/>
            <person name="Katoh M."/>
            <person name="Kawasawa Y."/>
            <person name="Kelso J."/>
            <person name="Kitamura H."/>
            <person name="Kitano H."/>
            <person name="Kollias G."/>
            <person name="Krishnan S.P."/>
            <person name="Kruger A."/>
            <person name="Kummerfeld S.K."/>
            <person name="Kurochkin I.V."/>
            <person name="Lareau L.F."/>
            <person name="Lazarevic D."/>
            <person name="Lipovich L."/>
            <person name="Liu J."/>
            <person name="Liuni S."/>
            <person name="McWilliam S."/>
            <person name="Madan Babu M."/>
            <person name="Madera M."/>
            <person name="Marchionni L."/>
            <person name="Matsuda H."/>
            <person name="Matsuzawa S."/>
            <person name="Miki H."/>
            <person name="Mignone F."/>
            <person name="Miyake S."/>
            <person name="Morris K."/>
            <person name="Mottagui-Tabar S."/>
            <person name="Mulder N."/>
            <person name="Nakano N."/>
            <person name="Nakauchi H."/>
            <person name="Ng P."/>
            <person name="Nilsson R."/>
            <person name="Nishiguchi S."/>
            <person name="Nishikawa S."/>
            <person name="Nori F."/>
            <person name="Ohara O."/>
            <person name="Okazaki Y."/>
            <person name="Orlando V."/>
            <person name="Pang K.C."/>
            <person name="Pavan W.J."/>
            <person name="Pavesi G."/>
            <person name="Pesole G."/>
            <person name="Petrovsky N."/>
            <person name="Piazza S."/>
            <person name="Reed J."/>
            <person name="Reid J.F."/>
            <person name="Ring B.Z."/>
            <person name="Ringwald M."/>
            <person name="Rost B."/>
            <person name="Ruan Y."/>
            <person name="Salzberg S.L."/>
            <person name="Sandelin A."/>
            <person name="Schneider C."/>
            <person name="Schoenbach C."/>
            <person name="Sekiguchi K."/>
            <person name="Semple C.A."/>
            <person name="Seno S."/>
            <person name="Sessa L."/>
            <person name="Sheng Y."/>
            <person name="Shibata Y."/>
            <person name="Shimada H."/>
            <person name="Shimada K."/>
            <person name="Silva D."/>
            <person name="Sinclair B."/>
            <person name="Sperling S."/>
            <person name="Stupka E."/>
            <person name="Sugiura K."/>
            <person name="Sultana R."/>
            <person name="Takenaka Y."/>
            <person name="Taki K."/>
            <person name="Tammoja K."/>
            <person name="Tan S.L."/>
            <person name="Tang S."/>
            <person name="Taylor M.S."/>
            <person name="Tegner J."/>
            <person name="Teichmann S.A."/>
            <person name="Ueda H.R."/>
            <person name="van Nimwegen E."/>
            <person name="Verardo R."/>
            <person name="Wei C.L."/>
            <person name="Yagi K."/>
            <person name="Yamanishi H."/>
            <person name="Zabarovsky E."/>
            <person name="Zhu S."/>
            <person name="Zimmer A."/>
            <person name="Hide W."/>
            <person name="Bult C."/>
            <person name="Grimmond S.M."/>
            <person name="Teasdale R.D."/>
            <person name="Liu E.T."/>
            <person name="Brusic V."/>
            <person name="Quackenbush J."/>
            <person name="Wahlestedt C."/>
            <person name="Mattick J.S."/>
            <person name="Hume D.A."/>
            <person name="Kai C."/>
            <person name="Sasaki D."/>
            <person name="Tomaru Y."/>
            <person name="Fukuda S."/>
            <person name="Kanamori-Katayama M."/>
            <person name="Suzuki M."/>
            <person name="Aoki J."/>
            <person name="Arakawa T."/>
            <person name="Iida J."/>
            <person name="Imamura K."/>
            <person name="Itoh M."/>
            <person name="Kato T."/>
            <person name="Kawaji H."/>
            <person name="Kawagashira N."/>
            <person name="Kawashima T."/>
            <person name="Kojima M."/>
            <person name="Kondo S."/>
            <person name="Konno H."/>
            <person name="Nakano K."/>
            <person name="Ninomiya N."/>
            <person name="Nishio T."/>
            <person name="Okada M."/>
            <person name="Plessy C."/>
            <person name="Shibata K."/>
            <person name="Shiraki T."/>
            <person name="Suzuki S."/>
            <person name="Tagami M."/>
            <person name="Waki K."/>
            <person name="Watahiki A."/>
            <person name="Okamura-Oho Y."/>
            <person name="Suzuki H."/>
            <person name="Kawai J."/>
            <person name="Hayashizaki Y."/>
        </authorList>
    </citation>
    <scope>NUCLEOTIDE SEQUENCE [LARGE SCALE MRNA]</scope>
    <source>
        <strain>C57BL/6J</strain>
        <tissue>Tongue</tissue>
    </source>
</reference>
<reference key="6">
    <citation type="journal article" date="2004" name="Genome Res.">
        <title>The status, quality, and expansion of the NIH full-length cDNA project: the Mammalian Gene Collection (MGC).</title>
        <authorList>
            <consortium name="The MGC Project Team"/>
        </authorList>
    </citation>
    <scope>NUCLEOTIDE SEQUENCE [LARGE SCALE MRNA]</scope>
    <source>
        <tissue>Mammary tumor</tissue>
    </source>
</reference>
<reference key="7">
    <citation type="journal article" date="1995" name="Nat. Genet.">
        <title>Adenosine-deaminase-deficient mice die perinatally and exhibit liver-cell degeneration, atelectasis and small intestinal cell death.</title>
        <authorList>
            <person name="Migchielsen A.A."/>
            <person name="Breuer M.L."/>
            <person name="van Roon M.A."/>
            <person name="te Riele H."/>
            <person name="Zurcher C."/>
            <person name="Ossendorp F."/>
            <person name="Toutain S."/>
            <person name="Hershfield M.S."/>
            <person name="Berns A."/>
            <person name="Valerio D."/>
        </authorList>
    </citation>
    <scope>DISRUPTION PHENOTYPE</scope>
</reference>
<reference key="8">
    <citation type="journal article" date="1995" name="Proc. Natl. Acad. Sci. U.S.A.">
        <title>Disruption of the adenosine deaminase gene causes hepatocellular impairment and perinatal lethality in mice.</title>
        <authorList>
            <person name="Wakamiya M."/>
            <person name="Blackburn M.R."/>
            <person name="Jurecic R."/>
            <person name="McArthur M.J."/>
            <person name="Geske R.S."/>
            <person name="Cartwright J. Jr."/>
            <person name="Mitani K."/>
            <person name="Vaishnav S."/>
            <person name="Belmont J.W."/>
            <person name="Kellems R.E."/>
            <person name="Finegold M.J."/>
            <person name="Montgomery C.A. Jr."/>
            <person name="Bradley A."/>
            <person name="Caskey C.T."/>
        </authorList>
    </citation>
    <scope>DISRUPTION PHENOTYPE</scope>
</reference>
<reference key="9">
    <citation type="journal article" date="1996" name="Biochemistry">
        <title>Site-directed mutagenesis of active site glutamate-217 in mouse adenosine deaminase.</title>
        <authorList>
            <person name="Mohamedali K.A."/>
            <person name="Kurz L.C."/>
            <person name="Rudolph F.B."/>
        </authorList>
    </citation>
    <scope>MUTAGENESIS OF GLU-217</scope>
    <scope>CIRCULAR DICHROISM</scope>
    <scope>BIOPHYSICOCHEMICAL PROPERTIES</scope>
    <scope>COFACTOR</scope>
    <scope>ACTIVE SITE</scope>
    <scope>FUNCTION</scope>
    <scope>CATALYTIC ACTIVITY</scope>
</reference>
<reference key="10">
    <citation type="journal article" date="1996" name="Neuroscience">
        <title>Adenosine deaminase in rodent median eminence: detection by antibody to the mouse enzyme and co-localization with adenosine deaminase-complexing protein (CD26).</title>
        <authorList>
            <person name="Nagy J.I."/>
            <person name="Yamamoto T."/>
            <person name="Uemura H."/>
            <person name="Schrader W.P."/>
        </authorList>
    </citation>
    <scope>SUBCELLULAR LOCATION</scope>
    <scope>TISSUE SPECIFICITY</scope>
</reference>
<reference key="11">
    <citation type="journal article" date="1997" name="Development">
        <title>Genetically engineered mice demonstrate that adenosine deaminase is essential for early postimplantation development.</title>
        <authorList>
            <person name="Blackburn M.R."/>
            <person name="Knudsen T.B."/>
            <person name="Kellems R.E."/>
        </authorList>
    </citation>
    <scope>FUNCTION</scope>
    <scope>CATALYTIC ACTIVITY</scope>
    <scope>TISSUE SPECIFICITY</scope>
    <scope>DEVELOPMENTAL STAGE</scope>
</reference>
<reference key="12">
    <citation type="journal article" date="2000" name="Biochem. Biophys. Res. Commun.">
        <title>Function of murine adenosine deaminase in the gastrointestinal tract.</title>
        <authorList>
            <person name="Xu P.A."/>
            <person name="Kellems R.E."/>
        </authorList>
    </citation>
    <scope>FUNCTION</scope>
    <scope>CATALYTIC ACTIVITY</scope>
</reference>
<reference key="13">
    <citation type="journal article" date="2000" name="J. Exp. Med.">
        <title>Metabolic consequences of adenosine deaminase deficiency in mice are associated with defects in alveogenesis, pulmonary inflammation, and airway obstruction.</title>
        <authorList>
            <person name="Blackburn M.R."/>
            <person name="Volmer J.B."/>
            <person name="Thrasher J.L."/>
            <person name="Zhong H."/>
            <person name="Crosby J.R."/>
            <person name="Lee J.J."/>
            <person name="Kellems R.E."/>
        </authorList>
    </citation>
    <scope>DISRUPTION PHENOTYPE</scope>
</reference>
<reference key="14">
    <citation type="journal article" date="2001" name="J. Clin. Invest.">
        <title>Adenosine deaminase deficiency increases thymic apoptosis and causes defective T cell receptor signaling.</title>
        <authorList>
            <person name="Apasov S.G."/>
            <person name="Blackburn M.R."/>
            <person name="Kellems R.E."/>
            <person name="Smith P.T."/>
            <person name="Sitkovsky M.V."/>
        </authorList>
    </citation>
    <scope>FUNCTION</scope>
</reference>
<reference key="15">
    <citation type="journal article" date="2010" name="Cell">
        <title>A tissue-specific atlas of mouse protein phosphorylation and expression.</title>
        <authorList>
            <person name="Huttlin E.L."/>
            <person name="Jedrychowski M.P."/>
            <person name="Elias J.E."/>
            <person name="Goswami T."/>
            <person name="Rad R."/>
            <person name="Beausoleil S.A."/>
            <person name="Villen J."/>
            <person name="Haas W."/>
            <person name="Sowa M.E."/>
            <person name="Gygi S.P."/>
        </authorList>
    </citation>
    <scope>IDENTIFICATION BY MASS SPECTROMETRY [LARGE SCALE ANALYSIS]</scope>
    <source>
        <tissue>Liver</tissue>
        <tissue>Lung</tissue>
        <tissue>Pancreas</tissue>
        <tissue>Spleen</tissue>
        <tissue>Testis</tissue>
    </source>
</reference>
<reference key="16">
    <citation type="journal article" date="2015" name="Pharmacol. Res. Perspect.">
        <title>Inhibition of adenosine deaminase (ADA)-mediated metabolism of cordycepin by natural substances.</title>
        <authorList>
            <person name="Li G."/>
            <person name="Nakagome I."/>
            <person name="Hirono S."/>
            <person name="Itoh T."/>
            <person name="Fujiwara R."/>
        </authorList>
    </citation>
    <scope>FUNCTION</scope>
    <scope>CATALYTIC ACTIVITY</scope>
</reference>
<reference key="17">
    <citation type="journal article" date="1991" name="Science">
        <title>Atomic structure of adenosine deaminase complexed with a transition-state analog: understanding catalysis and immunodeficiency mutations.</title>
        <authorList>
            <person name="Wilson D.K."/>
            <person name="Rudolph F.B."/>
            <person name="Quiocho F.A."/>
        </authorList>
    </citation>
    <scope>X-RAY CRYSTALLOGRAPHY (2.4 ANGSTROMS) IN COMPLEX WITH ZINC IONS AND TRANSITION STATE ANALOG 6-HYDROXYL-1,6-DIHYDROPURINE RIBONUCLEOTIDE</scope>
    <scope>COFACTOR</scope>
    <scope>PROPOSED ENZYME MECHANISM</scope>
</reference>
<reference key="18">
    <citation type="journal article" date="1996" name="Biochemistry">
        <title>Probing the functional role of two conserved active site aspartates in mouse adenosine deaminase.</title>
        <authorList>
            <person name="Sideraki V."/>
            <person name="Mohamedali K.A."/>
            <person name="Wilson D.K."/>
            <person name="Chang Z."/>
            <person name="Kellems R.E."/>
            <person name="Quiocho F.A."/>
            <person name="Rudolph F.B."/>
        </authorList>
    </citation>
    <scope>X-RAY CRYSTALLOGRAPHY (2.4 ANGSTROMS) OF 4-352 OF MUTANTS GLU-295 AND ALA-296 IN COMPLEXES WITH ZINC IONS; 6-HYDROXYL-1,6-DIHYDROPURINE RIBONUCLEOTIDE AND PURINE RIBOSIDE</scope>
    <scope>CIRCULAR DICHROISM</scope>
    <scope>BIOPHYSICOCHEMICAL PROPERTIES</scope>
    <scope>MUTAGENESIS OF ASP-295 AND ASP-296</scope>
    <scope>FUNCTION</scope>
    <scope>CATALYTIC ACTIVITY</scope>
</reference>
<reference key="19">
    <citation type="journal article" date="1996" name="Biochemistry">
        <title>Site-directed mutagenesis of histidine 238 in mouse adenosine deaminase: substitution of histidine 238 does not impede hydroxylate formation.</title>
        <authorList>
            <person name="Sideraki V."/>
            <person name="Wilson D.K."/>
            <person name="Kurz L.C."/>
            <person name="Quiocho F.A."/>
            <person name="Rudolph F.B."/>
        </authorList>
    </citation>
    <scope>X-RAY CRYSTALLOGRAPHY (2.4 ANGSTROMS) OF MUTANTS ALA-238 AND GLU-238 IN COMPLEXES WITH ZINC IONS; 6-HYDROXYL-1,6-DIHYDROPURINE RIBONUCLEOTIDE AND PURINE RIBOSIDE</scope>
    <scope>MUTAGENESIS OF HIS-238</scope>
    <scope>FUNCTION</scope>
    <scope>CATALYTIC ACTIVITY</scope>
</reference>
<reference key="20">
    <citation type="journal article" date="1998" name="Biochemistry">
        <title>Complexes of adenosine deaminase with two potent inhibitors: X-ray structures in four independent molecules at pH of maximum activity.</title>
        <authorList>
            <person name="Wang Z."/>
            <person name="Quiocho F.A."/>
        </authorList>
    </citation>
    <scope>X-RAY CRYSTALLOGRAPHY (2.6 ANGSTROMS) IN COMPLEX WITH ZINC IONS AND INHIBITOR</scope>
    <scope>COFACTOR</scope>
    <scope>ACTIVE SITE</scope>
</reference>
<sequence length="352" mass="39992">MAQTPAFNKPKVELHVHLDGAIKPETILYFGKKRGIALPADTVEELRNIIGMDKPLSLPGFLAKFDYYMPVIAGCREAIKRIAYEFVEMKAKEGVVYVEVRYSPHLLANSKVDPMPWNQTEGDVTPDDVVDLVNQGLQEGEQAFGIKVRSILCCMRHQPSWSLEVLELCKKYNQKTVVAMDLAGDETIEGSSLFPGHVEAYEGAVKNGIHRTVHAGEVGSPEVVREAVDILKTERVGHGYHTIEDEALYNRLLKENMHFEVCPWSSYLTGAWDPKTTHAVVRFKNDKANYSLNTDDPLIFKSTLDTDYQMTKKDMGFTEEEFKRLNINAAKSSFLPEEEKKELLERLYREYQ</sequence>
<feature type="initiator methionine" description="Removed" evidence="2">
    <location>
        <position position="1"/>
    </location>
</feature>
<feature type="chain" id="PRO_0000194353" description="Adenosine deaminase">
    <location>
        <begin position="2"/>
        <end position="352"/>
    </location>
</feature>
<feature type="active site" description="Proton donor" evidence="19 20">
    <location>
        <position position="217"/>
    </location>
</feature>
<feature type="binding site" evidence="7 12 14 16 21 22 23 24 25 26 27">
    <location>
        <position position="15"/>
    </location>
    <ligand>
        <name>Zn(2+)</name>
        <dbReference type="ChEBI" id="CHEBI:29105"/>
        <note>catalytic</note>
    </ligand>
</feature>
<feature type="binding site" evidence="7 12 14 16 21 22 23 24">
    <location>
        <position position="17"/>
    </location>
    <ligand>
        <name>substrate</name>
    </ligand>
</feature>
<feature type="binding site" evidence="7 12 14 16 21 22 23 24 25 26 27">
    <location>
        <position position="17"/>
    </location>
    <ligand>
        <name>Zn(2+)</name>
        <dbReference type="ChEBI" id="CHEBI:29105"/>
        <note>catalytic</note>
    </ligand>
</feature>
<feature type="binding site" evidence="7 12 14 16 21 22 23 24">
    <location>
        <position position="19"/>
    </location>
    <ligand>
        <name>substrate</name>
    </ligand>
</feature>
<feature type="binding site" evidence="7 12 14 16 22 24 25 26 27">
    <location>
        <position position="184"/>
    </location>
    <ligand>
        <name>substrate</name>
    </ligand>
</feature>
<feature type="binding site" evidence="7 12 14 16 21 22 23 24 25 26 27">
    <location>
        <position position="214"/>
    </location>
    <ligand>
        <name>Zn(2+)</name>
        <dbReference type="ChEBI" id="CHEBI:29105"/>
        <note>catalytic</note>
    </ligand>
</feature>
<feature type="binding site" evidence="7 12 14 16 21 22 23 24 25 26 27">
    <location>
        <position position="295"/>
    </location>
    <ligand>
        <name>Zn(2+)</name>
        <dbReference type="ChEBI" id="CHEBI:29105"/>
        <note>catalytic</note>
    </ligand>
</feature>
<feature type="binding site" evidence="12 14 23 26">
    <location>
        <position position="296"/>
    </location>
    <ligand>
        <name>substrate</name>
    </ligand>
</feature>
<feature type="site" description="Important for interaction with adenosine receptors and increasing their affinity for agonists" evidence="2">
    <location>
        <position position="58"/>
    </location>
</feature>
<feature type="site" description="Important for interaction with adenosine receptors and increasing their affinity for agonists" evidence="2">
    <location>
        <position position="62"/>
    </location>
</feature>
<feature type="site" description="Important for catalytic activity" evidence="14 16">
    <location>
        <position position="238"/>
    </location>
</feature>
<feature type="modified residue" description="N-acetylalanine" evidence="2">
    <location>
        <position position="2"/>
    </location>
</feature>
<feature type="modified residue" description="N6-acetyllysine" evidence="2">
    <location>
        <position position="54"/>
    </location>
</feature>
<feature type="modified residue" description="N6-acetyllysine" evidence="2">
    <location>
        <position position="232"/>
    </location>
</feature>
<feature type="mutagenesis site" description="Reduces catalytic activity 700-fold. No effect on affinity for adenosine." evidence="11">
    <original>E</original>
    <variation>D</variation>
    <location>
        <position position="217"/>
    </location>
</feature>
<feature type="mutagenesis site" description="Reduces catalytic activity 3200-fold. No effect on affinity for adenosine." evidence="11">
    <original>E</original>
    <variation>G</variation>
    <location>
        <position position="217"/>
    </location>
</feature>
<feature type="mutagenesis site" description="Reduces catalytic activity 4800-fold, and slightly increases affinity for substrate." evidence="11">
    <original>E</original>
    <variation>Q</variation>
    <location>
        <position position="217"/>
    </location>
</feature>
<feature type="mutagenesis site" description="Loss of activity." evidence="11">
    <original>E</original>
    <variation>S</variation>
    <location>
        <position position="217"/>
    </location>
</feature>
<feature type="mutagenesis site" description="Increases affinity for adenosine 20-fold. Reduces enzyme activity 500-fold." evidence="14">
    <original>H</original>
    <variation>A</variation>
    <location>
        <position position="238"/>
    </location>
</feature>
<feature type="mutagenesis site" description="Nearly abolishes enzyme activity." evidence="14">
    <original>H</original>
    <variation>E</variation>
    <location>
        <position position="238"/>
    </location>
</feature>
<feature type="mutagenesis site" description="Reduces enzyme activity 1500-fold. No effect on affinity for adenosine." evidence="14">
    <original>H</original>
    <variation>R</variation>
    <location>
        <position position="238"/>
    </location>
</feature>
<feature type="mutagenesis site" description="No effect on affinity for adenosine. Reduces enzyme activity 2750-fold." evidence="12">
    <original>D</original>
    <variation>E</variation>
    <location>
        <position position="295"/>
    </location>
</feature>
<feature type="mutagenesis site" description="Reduces affinity for adenosine 70-fold. Reduces enzyme activity 110000-fold." evidence="12">
    <original>D</original>
    <variation>A</variation>
    <location>
        <position position="296"/>
    </location>
</feature>
<feature type="mutagenesis site" description="Reduces affinity for adenosine 10-fold. Reduces enzyme activity 100-fold." evidence="12">
    <original>D</original>
    <variation>N</variation>
    <location>
        <position position="296"/>
    </location>
</feature>
<feature type="sequence conflict" description="In Ref. 2; AAB07142." evidence="17" ref="2">
    <original>E</original>
    <variation>R</variation>
    <location>
        <position position="141"/>
    </location>
</feature>
<feature type="strand" evidence="29">
    <location>
        <begin position="11"/>
        <end position="13"/>
    </location>
</feature>
<feature type="helix" evidence="29">
    <location>
        <begin position="18"/>
        <end position="20"/>
    </location>
</feature>
<feature type="helix" evidence="29">
    <location>
        <begin position="24"/>
        <end position="34"/>
    </location>
</feature>
<feature type="helix" evidence="29">
    <location>
        <begin position="43"/>
        <end position="50"/>
    </location>
</feature>
<feature type="helix" evidence="29">
    <location>
        <begin position="58"/>
        <end position="62"/>
    </location>
</feature>
<feature type="helix" evidence="29">
    <location>
        <begin position="65"/>
        <end position="72"/>
    </location>
</feature>
<feature type="helix" evidence="29">
    <location>
        <begin position="76"/>
        <end position="92"/>
    </location>
</feature>
<feature type="strand" evidence="29">
    <location>
        <begin position="95"/>
        <end position="102"/>
    </location>
</feature>
<feature type="helix" evidence="29">
    <location>
        <begin position="105"/>
        <end position="107"/>
    </location>
</feature>
<feature type="strand" evidence="30">
    <location>
        <begin position="109"/>
        <end position="111"/>
    </location>
</feature>
<feature type="helix" evidence="29">
    <location>
        <begin position="116"/>
        <end position="118"/>
    </location>
</feature>
<feature type="helix" evidence="29">
    <location>
        <begin position="126"/>
        <end position="144"/>
    </location>
</feature>
<feature type="strand" evidence="29">
    <location>
        <begin position="147"/>
        <end position="155"/>
    </location>
</feature>
<feature type="helix" evidence="29">
    <location>
        <begin position="159"/>
        <end position="161"/>
    </location>
</feature>
<feature type="helix" evidence="29">
    <location>
        <begin position="162"/>
        <end position="171"/>
    </location>
</feature>
<feature type="turn" evidence="29">
    <location>
        <begin position="174"/>
        <end position="176"/>
    </location>
</feature>
<feature type="strand" evidence="29">
    <location>
        <begin position="177"/>
        <end position="184"/>
    </location>
</feature>
<feature type="helix" evidence="29">
    <location>
        <begin position="191"/>
        <end position="193"/>
    </location>
</feature>
<feature type="helix" evidence="29">
    <location>
        <begin position="195"/>
        <end position="207"/>
    </location>
</feature>
<feature type="strand" evidence="29">
    <location>
        <begin position="210"/>
        <end position="219"/>
    </location>
</feature>
<feature type="helix" evidence="29">
    <location>
        <begin position="221"/>
        <end position="229"/>
    </location>
</feature>
<feature type="strand" evidence="29">
    <location>
        <begin position="234"/>
        <end position="238"/>
    </location>
</feature>
<feature type="helix" evidence="29">
    <location>
        <begin position="240"/>
        <end position="244"/>
    </location>
</feature>
<feature type="helix" evidence="29">
    <location>
        <begin position="246"/>
        <end position="254"/>
    </location>
</feature>
<feature type="strand" evidence="29">
    <location>
        <begin position="258"/>
        <end position="261"/>
    </location>
</feature>
<feature type="helix" evidence="29">
    <location>
        <begin position="263"/>
        <end position="268"/>
    </location>
</feature>
<feature type="strand" evidence="29">
    <location>
        <begin position="270"/>
        <end position="272"/>
    </location>
</feature>
<feature type="helix" evidence="29">
    <location>
        <begin position="279"/>
        <end position="285"/>
    </location>
</feature>
<feature type="strand" evidence="29">
    <location>
        <begin position="289"/>
        <end position="292"/>
    </location>
</feature>
<feature type="helix" evidence="29">
    <location>
        <begin position="297"/>
        <end position="300"/>
    </location>
</feature>
<feature type="helix" evidence="29">
    <location>
        <begin position="304"/>
        <end position="315"/>
    </location>
</feature>
<feature type="helix" evidence="29">
    <location>
        <begin position="319"/>
        <end position="332"/>
    </location>
</feature>
<feature type="strand" evidence="28">
    <location>
        <begin position="333"/>
        <end position="335"/>
    </location>
</feature>
<feature type="helix" evidence="29">
    <location>
        <begin position="337"/>
        <end position="350"/>
    </location>
</feature>
<gene>
    <name type="primary">Ada</name>
</gene>
<proteinExistence type="evidence at protein level"/>
<name>ADA_MOUSE</name>
<evidence type="ECO:0000250" key="1"/>
<evidence type="ECO:0000250" key="2">
    <source>
        <dbReference type="UniProtKB" id="P00813"/>
    </source>
</evidence>
<evidence type="ECO:0000250" key="3">
    <source>
        <dbReference type="UniProtKB" id="P56658"/>
    </source>
</evidence>
<evidence type="ECO:0000269" key="4">
    <source>
    </source>
</evidence>
<evidence type="ECO:0000269" key="5">
    <source>
    </source>
</evidence>
<evidence type="ECO:0000269" key="6">
    <source>
    </source>
</evidence>
<evidence type="ECO:0000269" key="7">
    <source>
    </source>
</evidence>
<evidence type="ECO:0000269" key="8">
    <source>
    </source>
</evidence>
<evidence type="ECO:0000269" key="9">
    <source>
    </source>
</evidence>
<evidence type="ECO:0000269" key="10">
    <source>
    </source>
</evidence>
<evidence type="ECO:0000269" key="11">
    <source>
    </source>
</evidence>
<evidence type="ECO:0000269" key="12">
    <source>
    </source>
</evidence>
<evidence type="ECO:0000269" key="13">
    <source>
    </source>
</evidence>
<evidence type="ECO:0000269" key="14">
    <source>
    </source>
</evidence>
<evidence type="ECO:0000269" key="15">
    <source>
    </source>
</evidence>
<evidence type="ECO:0000269" key="16">
    <source>
    </source>
</evidence>
<evidence type="ECO:0000305" key="17"/>
<evidence type="ECO:0000305" key="18">
    <source>
    </source>
</evidence>
<evidence type="ECO:0000305" key="19">
    <source>
    </source>
</evidence>
<evidence type="ECO:0000305" key="20">
    <source>
    </source>
</evidence>
<evidence type="ECO:0007744" key="21">
    <source>
        <dbReference type="PDB" id="1A4L"/>
    </source>
</evidence>
<evidence type="ECO:0007744" key="22">
    <source>
        <dbReference type="PDB" id="1A4M"/>
    </source>
</evidence>
<evidence type="ECO:0007744" key="23">
    <source>
        <dbReference type="PDB" id="1FKW"/>
    </source>
</evidence>
<evidence type="ECO:0007744" key="24">
    <source>
        <dbReference type="PDB" id="1FKX"/>
    </source>
</evidence>
<evidence type="ECO:0007744" key="25">
    <source>
        <dbReference type="PDB" id="1UIO"/>
    </source>
</evidence>
<evidence type="ECO:0007744" key="26">
    <source>
        <dbReference type="PDB" id="1UIP"/>
    </source>
</evidence>
<evidence type="ECO:0007744" key="27">
    <source>
        <dbReference type="PDB" id="2ADA"/>
    </source>
</evidence>
<evidence type="ECO:0007829" key="28">
    <source>
        <dbReference type="PDB" id="1A4L"/>
    </source>
</evidence>
<evidence type="ECO:0007829" key="29">
    <source>
        <dbReference type="PDB" id="3MVI"/>
    </source>
</evidence>
<evidence type="ECO:0007829" key="30">
    <source>
        <dbReference type="PDB" id="3T1G"/>
    </source>
</evidence>